<sequence length="799" mass="87771">MTSESPTNYDGIDSRIDTVADRVGSVWPLHSFVTANPLSGFEGSPFEDAVAEGERLFGGRGYPRADIFRRAWEDGRIDDDALRTELERRGIERDPETLLEAMETAETKRDDDPDDATAAVDRVLSKWLAAYLDQGQAPWPMPNREEGFYSAWRAVAPYDSDVPGCDDTEDVPATATGAVETVLDAYPRRRWDSIIEHHLAALPGWTGFIKQRADDEFDPWQSEYPITLTEYLGVRLTLVDLLDAPVAPETDADAGDETTAVREAWLSAWEQSYREHLLEDVDDDVTESSHGNGKRPAAQLVFCIDTRSEIIRRHIEQQGPYETHGYAGFFGVPMRHEAYGSDVTTEACPPIVEPEHIIADRPDAHHAEQETAHNRWHGLVSAARKHFKRLKTNPVAAFPFVEGAGSAYGSAMALRTLLPSAVYKLGSTVDEHVPSSHEFCSPTLDRPRMTHEEKVEYAQTAFELMGWTEFARLVVFTGHTSHTTNNPFDSSLQCGACAGNPGGPNARVLAKICNDEAVKDDLRERGVDIPDDTVFVGAEHNTTTDEITLFDGEVPKSHHADVAALRDSLEQARAGAAAERSEALNGADPDKGVSETASRAADWAQTRPEWGLAGNASFVIGPRELTADSDLDGRAFLHSYDWTTDPDGDALELIMLGPLVVTQWINNQYYFATVDNRVYGSGSKVTQNPVGNIGVVQGNGGDLMMGLPLQSLMSDDDSPYHQPLRLTAVIHASVENVTDILREHGHVRRLVDNGWVGNLTVVDPTRDNAAFDYVGGLEWEPSVQQDASSERVAAPAASD</sequence>
<gene>
    <name evidence="1" type="primary">dabA</name>
    <name type="ordered locus">NP_5058A</name>
</gene>
<comment type="function">
    <text evidence="1">Part of an energy-coupled inorganic carbon pump.</text>
</comment>
<comment type="cofactor">
    <cofactor evidence="1">
        <name>Zn(2+)</name>
        <dbReference type="ChEBI" id="CHEBI:29105"/>
    </cofactor>
</comment>
<comment type="subunit">
    <text evidence="1">Forms a complex with DabB.</text>
</comment>
<comment type="subcellular location">
    <subcellularLocation>
        <location evidence="1">Cell membrane</location>
        <topology evidence="1">Peripheral membrane protein</topology>
    </subcellularLocation>
</comment>
<comment type="similarity">
    <text evidence="1">Belongs to the inorganic carbon transporter (TC 9.A.2) DabA family.</text>
</comment>
<feature type="chain" id="PRO_0000387332" description="Probable inorganic carbon transporter subunit DabA">
    <location>
        <begin position="1"/>
        <end position="799"/>
    </location>
</feature>
<feature type="region of interest" description="Disordered" evidence="2">
    <location>
        <begin position="574"/>
        <end position="598"/>
    </location>
</feature>
<feature type="binding site" evidence="1">
    <location>
        <position position="303"/>
    </location>
    <ligand>
        <name>Zn(2+)</name>
        <dbReference type="ChEBI" id="CHEBI:29105"/>
    </ligand>
</feature>
<feature type="binding site" evidence="1">
    <location>
        <position position="305"/>
    </location>
    <ligand>
        <name>Zn(2+)</name>
        <dbReference type="ChEBI" id="CHEBI:29105"/>
    </ligand>
</feature>
<feature type="binding site" evidence="1">
    <location>
        <position position="479"/>
    </location>
    <ligand>
        <name>Zn(2+)</name>
        <dbReference type="ChEBI" id="CHEBI:29105"/>
    </ligand>
</feature>
<feature type="binding site" evidence="1">
    <location>
        <position position="494"/>
    </location>
    <ligand>
        <name>Zn(2+)</name>
        <dbReference type="ChEBI" id="CHEBI:29105"/>
    </ligand>
</feature>
<keyword id="KW-1003">Cell membrane</keyword>
<keyword id="KW-0472">Membrane</keyword>
<keyword id="KW-0479">Metal-binding</keyword>
<keyword id="KW-1185">Reference proteome</keyword>
<keyword id="KW-0813">Transport</keyword>
<keyword id="KW-0862">Zinc</keyword>
<accession>Q3IMN8</accession>
<evidence type="ECO:0000255" key="1">
    <source>
        <dbReference type="HAMAP-Rule" id="MF_01871"/>
    </source>
</evidence>
<evidence type="ECO:0000256" key="2">
    <source>
        <dbReference type="SAM" id="MobiDB-lite"/>
    </source>
</evidence>
<protein>
    <recommendedName>
        <fullName evidence="1">Probable inorganic carbon transporter subunit DabA</fullName>
    </recommendedName>
</protein>
<reference key="1">
    <citation type="journal article" date="2005" name="Genome Res.">
        <title>Living with two extremes: conclusions from the genome sequence of Natronomonas pharaonis.</title>
        <authorList>
            <person name="Falb M."/>
            <person name="Pfeiffer F."/>
            <person name="Palm P."/>
            <person name="Rodewald K."/>
            <person name="Hickmann V."/>
            <person name="Tittor J."/>
            <person name="Oesterhelt D."/>
        </authorList>
    </citation>
    <scope>NUCLEOTIDE SEQUENCE [LARGE SCALE GENOMIC DNA]</scope>
    <source>
        <strain>ATCC 35678 / DSM 2160 / CIP 103997 / JCM 8858 / NBRC 14720 / NCIMB 2260 / Gabara</strain>
    </source>
</reference>
<proteinExistence type="inferred from homology"/>
<dbReference type="EMBL" id="CR936257">
    <property type="protein sequence ID" value="CAI50620.2"/>
    <property type="molecule type" value="Genomic_DNA"/>
</dbReference>
<dbReference type="RefSeq" id="WP_011324230.1">
    <property type="nucleotide sequence ID" value="NC_007426.1"/>
</dbReference>
<dbReference type="STRING" id="348780.NP_5058A"/>
<dbReference type="EnsemblBacteria" id="CAI50620">
    <property type="protein sequence ID" value="CAI50620"/>
    <property type="gene ID" value="NP_5058A"/>
</dbReference>
<dbReference type="GeneID" id="3702242"/>
<dbReference type="KEGG" id="nph:NP_5058A"/>
<dbReference type="eggNOG" id="arCOG04520">
    <property type="taxonomic scope" value="Archaea"/>
</dbReference>
<dbReference type="HOGENOM" id="CLU_009885_0_0_2"/>
<dbReference type="OrthoDB" id="185928at2157"/>
<dbReference type="Proteomes" id="UP000002698">
    <property type="component" value="Chromosome"/>
</dbReference>
<dbReference type="GO" id="GO:0005886">
    <property type="term" value="C:plasma membrane"/>
    <property type="evidence" value="ECO:0007669"/>
    <property type="project" value="UniProtKB-SubCell"/>
</dbReference>
<dbReference type="GO" id="GO:0008270">
    <property type="term" value="F:zinc ion binding"/>
    <property type="evidence" value="ECO:0007669"/>
    <property type="project" value="UniProtKB-UniRule"/>
</dbReference>
<dbReference type="HAMAP" id="MF_01871">
    <property type="entry name" value="DabA"/>
    <property type="match status" value="1"/>
</dbReference>
<dbReference type="InterPro" id="IPR018752">
    <property type="entry name" value="DabA"/>
</dbReference>
<dbReference type="PANTHER" id="PTHR38344:SF1">
    <property type="entry name" value="INORGANIC CARBON TRANSPORTER SUBUNIT DABA-RELATED"/>
    <property type="match status" value="1"/>
</dbReference>
<dbReference type="PANTHER" id="PTHR38344">
    <property type="entry name" value="UPF0753 PROTEIN AQ_863"/>
    <property type="match status" value="1"/>
</dbReference>
<dbReference type="Pfam" id="PF10070">
    <property type="entry name" value="DabA"/>
    <property type="match status" value="1"/>
</dbReference>
<name>DABA_NATPD</name>
<organism>
    <name type="scientific">Natronomonas pharaonis (strain ATCC 35678 / DSM 2160 / CIP 103997 / JCM 8858 / NBRC 14720 / NCIMB 2260 / Gabara)</name>
    <name type="common">Halobacterium pharaonis</name>
    <dbReference type="NCBI Taxonomy" id="348780"/>
    <lineage>
        <taxon>Archaea</taxon>
        <taxon>Methanobacteriati</taxon>
        <taxon>Methanobacteriota</taxon>
        <taxon>Stenosarchaea group</taxon>
        <taxon>Halobacteria</taxon>
        <taxon>Halobacteriales</taxon>
        <taxon>Haloarculaceae</taxon>
        <taxon>Natronomonas</taxon>
    </lineage>
</organism>